<protein>
    <recommendedName>
        <fullName evidence="1">Large ribosomal subunit protein uL22</fullName>
    </recommendedName>
    <alternativeName>
        <fullName evidence="2">50S ribosomal protein L22</fullName>
    </alternativeName>
</protein>
<evidence type="ECO:0000255" key="1">
    <source>
        <dbReference type="HAMAP-Rule" id="MF_01331"/>
    </source>
</evidence>
<evidence type="ECO:0000305" key="2"/>
<feature type="chain" id="PRO_0000243155" description="Large ribosomal subunit protein uL22">
    <location>
        <begin position="1"/>
        <end position="110"/>
    </location>
</feature>
<gene>
    <name evidence="1" type="primary">rplV</name>
    <name type="ordered locus">NTHI0943</name>
</gene>
<name>RL22_HAEI8</name>
<sequence>METIAKHRYARTSAQKARLVADLIRGKKVAQALEILTFTNKKAAALVKKVLESAIANAEHNDGADIDDLKVAKIFVDEGPSMKRVMPRAKGRADRILKRTSHITVVVSDR</sequence>
<organism>
    <name type="scientific">Haemophilus influenzae (strain 86-028NP)</name>
    <dbReference type="NCBI Taxonomy" id="281310"/>
    <lineage>
        <taxon>Bacteria</taxon>
        <taxon>Pseudomonadati</taxon>
        <taxon>Pseudomonadota</taxon>
        <taxon>Gammaproteobacteria</taxon>
        <taxon>Pasteurellales</taxon>
        <taxon>Pasteurellaceae</taxon>
        <taxon>Haemophilus</taxon>
    </lineage>
</organism>
<reference key="1">
    <citation type="journal article" date="2005" name="J. Bacteriol.">
        <title>Genomic sequence of an otitis media isolate of nontypeable Haemophilus influenzae: comparative study with H. influenzae serotype d, strain KW20.</title>
        <authorList>
            <person name="Harrison A."/>
            <person name="Dyer D.W."/>
            <person name="Gillaspy A."/>
            <person name="Ray W.C."/>
            <person name="Mungur R."/>
            <person name="Carson M.B."/>
            <person name="Zhong H."/>
            <person name="Gipson J."/>
            <person name="Gipson M."/>
            <person name="Johnson L.S."/>
            <person name="Lewis L."/>
            <person name="Bakaletz L.O."/>
            <person name="Munson R.S. Jr."/>
        </authorList>
    </citation>
    <scope>NUCLEOTIDE SEQUENCE [LARGE SCALE GENOMIC DNA]</scope>
    <source>
        <strain>86-028NP</strain>
    </source>
</reference>
<proteinExistence type="inferred from homology"/>
<keyword id="KW-0687">Ribonucleoprotein</keyword>
<keyword id="KW-0689">Ribosomal protein</keyword>
<keyword id="KW-0694">RNA-binding</keyword>
<keyword id="KW-0699">rRNA-binding</keyword>
<comment type="function">
    <text evidence="1">This protein binds specifically to 23S rRNA; its binding is stimulated by other ribosomal proteins, e.g. L4, L17, and L20. It is important during the early stages of 50S assembly. It makes multiple contacts with different domains of the 23S rRNA in the assembled 50S subunit and ribosome (By similarity).</text>
</comment>
<comment type="function">
    <text evidence="1">The globular domain of the protein is located near the polypeptide exit tunnel on the outside of the subunit, while an extended beta-hairpin is found that lines the wall of the exit tunnel in the center of the 70S ribosome.</text>
</comment>
<comment type="subunit">
    <text evidence="1">Part of the 50S ribosomal subunit.</text>
</comment>
<comment type="similarity">
    <text evidence="1">Belongs to the universal ribosomal protein uL22 family.</text>
</comment>
<accession>Q4QMB7</accession>
<dbReference type="EMBL" id="CP000057">
    <property type="protein sequence ID" value="AAX87830.1"/>
    <property type="molecule type" value="Genomic_DNA"/>
</dbReference>
<dbReference type="RefSeq" id="WP_005625897.1">
    <property type="nucleotide sequence ID" value="NC_007146.2"/>
</dbReference>
<dbReference type="SMR" id="Q4QMB7"/>
<dbReference type="GeneID" id="93298794"/>
<dbReference type="KEGG" id="hit:NTHI0943"/>
<dbReference type="HOGENOM" id="CLU_083987_3_3_6"/>
<dbReference type="Proteomes" id="UP000002525">
    <property type="component" value="Chromosome"/>
</dbReference>
<dbReference type="GO" id="GO:0022625">
    <property type="term" value="C:cytosolic large ribosomal subunit"/>
    <property type="evidence" value="ECO:0007669"/>
    <property type="project" value="TreeGrafter"/>
</dbReference>
<dbReference type="GO" id="GO:0019843">
    <property type="term" value="F:rRNA binding"/>
    <property type="evidence" value="ECO:0007669"/>
    <property type="project" value="UniProtKB-UniRule"/>
</dbReference>
<dbReference type="GO" id="GO:0003735">
    <property type="term" value="F:structural constituent of ribosome"/>
    <property type="evidence" value="ECO:0007669"/>
    <property type="project" value="InterPro"/>
</dbReference>
<dbReference type="GO" id="GO:0006412">
    <property type="term" value="P:translation"/>
    <property type="evidence" value="ECO:0007669"/>
    <property type="project" value="UniProtKB-UniRule"/>
</dbReference>
<dbReference type="CDD" id="cd00336">
    <property type="entry name" value="Ribosomal_L22"/>
    <property type="match status" value="1"/>
</dbReference>
<dbReference type="FunFam" id="3.90.470.10:FF:000001">
    <property type="entry name" value="50S ribosomal protein L22"/>
    <property type="match status" value="1"/>
</dbReference>
<dbReference type="Gene3D" id="3.90.470.10">
    <property type="entry name" value="Ribosomal protein L22/L17"/>
    <property type="match status" value="1"/>
</dbReference>
<dbReference type="HAMAP" id="MF_01331_B">
    <property type="entry name" value="Ribosomal_uL22_B"/>
    <property type="match status" value="1"/>
</dbReference>
<dbReference type="InterPro" id="IPR001063">
    <property type="entry name" value="Ribosomal_uL22"/>
</dbReference>
<dbReference type="InterPro" id="IPR005727">
    <property type="entry name" value="Ribosomal_uL22_bac/chlpt-type"/>
</dbReference>
<dbReference type="InterPro" id="IPR047867">
    <property type="entry name" value="Ribosomal_uL22_bac/org-type"/>
</dbReference>
<dbReference type="InterPro" id="IPR018260">
    <property type="entry name" value="Ribosomal_uL22_CS"/>
</dbReference>
<dbReference type="InterPro" id="IPR036394">
    <property type="entry name" value="Ribosomal_uL22_sf"/>
</dbReference>
<dbReference type="NCBIfam" id="TIGR01044">
    <property type="entry name" value="rplV_bact"/>
    <property type="match status" value="1"/>
</dbReference>
<dbReference type="PANTHER" id="PTHR13501">
    <property type="entry name" value="CHLOROPLAST 50S RIBOSOMAL PROTEIN L22-RELATED"/>
    <property type="match status" value="1"/>
</dbReference>
<dbReference type="PANTHER" id="PTHR13501:SF8">
    <property type="entry name" value="LARGE RIBOSOMAL SUBUNIT PROTEIN UL22M"/>
    <property type="match status" value="1"/>
</dbReference>
<dbReference type="Pfam" id="PF00237">
    <property type="entry name" value="Ribosomal_L22"/>
    <property type="match status" value="1"/>
</dbReference>
<dbReference type="SUPFAM" id="SSF54843">
    <property type="entry name" value="Ribosomal protein L22"/>
    <property type="match status" value="1"/>
</dbReference>
<dbReference type="PROSITE" id="PS00464">
    <property type="entry name" value="RIBOSOMAL_L22"/>
    <property type="match status" value="1"/>
</dbReference>